<sequence>MGSFSIWHWLIVLLIVVMVFGTKKLKNMGSDLGSAVKGFKDGMKDGGQSAAATDDKPAAPAGQVTNAQASDKTTIDVEARQKS</sequence>
<name>TATA_POLSJ</name>
<comment type="function">
    <text evidence="1">Part of the twin-arginine translocation (Tat) system that transports large folded proteins containing a characteristic twin-arginine motif in their signal peptide across membranes. TatA could form the protein-conducting channel of the Tat system.</text>
</comment>
<comment type="subunit">
    <text evidence="1">The Tat system comprises two distinct complexes: a TatABC complex, containing multiple copies of TatA, TatB and TatC subunits, and a separate TatA complex, containing only TatA subunits. Substrates initially bind to the TatABC complex, which probably triggers association of the separate TatA complex to form the active translocon.</text>
</comment>
<comment type="subcellular location">
    <subcellularLocation>
        <location evidence="1">Cell inner membrane</location>
        <topology evidence="1">Single-pass membrane protein</topology>
    </subcellularLocation>
</comment>
<comment type="similarity">
    <text evidence="1">Belongs to the TatA/E family.</text>
</comment>
<evidence type="ECO:0000255" key="1">
    <source>
        <dbReference type="HAMAP-Rule" id="MF_00236"/>
    </source>
</evidence>
<evidence type="ECO:0000256" key="2">
    <source>
        <dbReference type="SAM" id="MobiDB-lite"/>
    </source>
</evidence>
<reference key="1">
    <citation type="journal article" date="2008" name="Appl. Environ. Microbiol.">
        <title>The genome of Polaromonas sp. strain JS666: insights into the evolution of a hydrocarbon- and xenobiotic-degrading bacterium, and features of relevance to biotechnology.</title>
        <authorList>
            <person name="Mattes T.E."/>
            <person name="Alexander A.K."/>
            <person name="Richardson P.M."/>
            <person name="Munk A.C."/>
            <person name="Han C.S."/>
            <person name="Stothard P."/>
            <person name="Coleman N.V."/>
        </authorList>
    </citation>
    <scope>NUCLEOTIDE SEQUENCE [LARGE SCALE GENOMIC DNA]</scope>
    <source>
        <strain>JS666 / ATCC BAA-500</strain>
    </source>
</reference>
<dbReference type="EMBL" id="CP000316">
    <property type="protein sequence ID" value="ABE42770.1"/>
    <property type="molecule type" value="Genomic_DNA"/>
</dbReference>
<dbReference type="RefSeq" id="WP_011481773.1">
    <property type="nucleotide sequence ID" value="NC_007948.1"/>
</dbReference>
<dbReference type="SMR" id="Q12FC2"/>
<dbReference type="STRING" id="296591.Bpro_0814"/>
<dbReference type="KEGG" id="pol:Bpro_0814"/>
<dbReference type="eggNOG" id="COG1826">
    <property type="taxonomic scope" value="Bacteria"/>
</dbReference>
<dbReference type="HOGENOM" id="CLU_086034_5_1_4"/>
<dbReference type="OrthoDB" id="7066617at2"/>
<dbReference type="Proteomes" id="UP000001983">
    <property type="component" value="Chromosome"/>
</dbReference>
<dbReference type="GO" id="GO:0033281">
    <property type="term" value="C:TAT protein transport complex"/>
    <property type="evidence" value="ECO:0007669"/>
    <property type="project" value="UniProtKB-UniRule"/>
</dbReference>
<dbReference type="GO" id="GO:0008320">
    <property type="term" value="F:protein transmembrane transporter activity"/>
    <property type="evidence" value="ECO:0007669"/>
    <property type="project" value="UniProtKB-UniRule"/>
</dbReference>
<dbReference type="GO" id="GO:0043953">
    <property type="term" value="P:protein transport by the Tat complex"/>
    <property type="evidence" value="ECO:0007669"/>
    <property type="project" value="UniProtKB-UniRule"/>
</dbReference>
<dbReference type="Gene3D" id="1.20.5.3310">
    <property type="match status" value="1"/>
</dbReference>
<dbReference type="HAMAP" id="MF_00236">
    <property type="entry name" value="TatA_E"/>
    <property type="match status" value="1"/>
</dbReference>
<dbReference type="InterPro" id="IPR003369">
    <property type="entry name" value="TatA/B/E"/>
</dbReference>
<dbReference type="InterPro" id="IPR006312">
    <property type="entry name" value="TatA/E"/>
</dbReference>
<dbReference type="NCBIfam" id="NF002813">
    <property type="entry name" value="PRK02958.1"/>
    <property type="match status" value="1"/>
</dbReference>
<dbReference type="NCBIfam" id="TIGR01411">
    <property type="entry name" value="tatAE"/>
    <property type="match status" value="1"/>
</dbReference>
<dbReference type="PANTHER" id="PTHR42982">
    <property type="entry name" value="SEC-INDEPENDENT PROTEIN TRANSLOCASE PROTEIN TATA"/>
    <property type="match status" value="1"/>
</dbReference>
<dbReference type="PANTHER" id="PTHR42982:SF1">
    <property type="entry name" value="SEC-INDEPENDENT PROTEIN TRANSLOCASE PROTEIN TATA"/>
    <property type="match status" value="1"/>
</dbReference>
<dbReference type="Pfam" id="PF02416">
    <property type="entry name" value="TatA_B_E"/>
    <property type="match status" value="1"/>
</dbReference>
<accession>Q12FC2</accession>
<feature type="chain" id="PRO_1000044419" description="Sec-independent protein translocase protein TatA">
    <location>
        <begin position="1"/>
        <end position="83"/>
    </location>
</feature>
<feature type="transmembrane region" description="Helical" evidence="1">
    <location>
        <begin position="1"/>
        <end position="21"/>
    </location>
</feature>
<feature type="region of interest" description="Disordered" evidence="2">
    <location>
        <begin position="44"/>
        <end position="83"/>
    </location>
</feature>
<feature type="compositionally biased region" description="Polar residues" evidence="2">
    <location>
        <begin position="63"/>
        <end position="72"/>
    </location>
</feature>
<feature type="compositionally biased region" description="Basic and acidic residues" evidence="2">
    <location>
        <begin position="73"/>
        <end position="83"/>
    </location>
</feature>
<organism>
    <name type="scientific">Polaromonas sp. (strain JS666 / ATCC BAA-500)</name>
    <dbReference type="NCBI Taxonomy" id="296591"/>
    <lineage>
        <taxon>Bacteria</taxon>
        <taxon>Pseudomonadati</taxon>
        <taxon>Pseudomonadota</taxon>
        <taxon>Betaproteobacteria</taxon>
        <taxon>Burkholderiales</taxon>
        <taxon>Comamonadaceae</taxon>
        <taxon>Polaromonas</taxon>
    </lineage>
</organism>
<keyword id="KW-0997">Cell inner membrane</keyword>
<keyword id="KW-1003">Cell membrane</keyword>
<keyword id="KW-0472">Membrane</keyword>
<keyword id="KW-0653">Protein transport</keyword>
<keyword id="KW-1185">Reference proteome</keyword>
<keyword id="KW-0811">Translocation</keyword>
<keyword id="KW-0812">Transmembrane</keyword>
<keyword id="KW-1133">Transmembrane helix</keyword>
<keyword id="KW-0813">Transport</keyword>
<protein>
    <recommendedName>
        <fullName evidence="1">Sec-independent protein translocase protein TatA</fullName>
    </recommendedName>
</protein>
<proteinExistence type="inferred from homology"/>
<gene>
    <name evidence="1" type="primary">tatA</name>
    <name type="ordered locus">Bpro_0814</name>
</gene>